<keyword id="KW-0249">Electron transport</keyword>
<keyword id="KW-0274">FAD</keyword>
<keyword id="KW-0285">Flavoprotein</keyword>
<keyword id="KW-0813">Transport</keyword>
<gene>
    <name evidence="1" type="primary">fixB</name>
    <name type="ordered locus">ECIAI39_0043</name>
</gene>
<name>FIXB_ECO7I</name>
<evidence type="ECO:0000255" key="1">
    <source>
        <dbReference type="HAMAP-Rule" id="MF_01056"/>
    </source>
</evidence>
<accession>B7NHE6</accession>
<sequence>MNTFSQVWVFSDTPSRLPELMNGAQALANQINTFVLNDADGAQAIQLGANHVWKLSGKPDERMIEDYAGVMADTIRQHGADGLVLLPNTRRGKLLAAKLGYRLKAAVSNDASTVSVQDGKATVKHMVYGGLAIGEERIATPYAVLTISSGTFDAAQPDASRTGETHTVEWLAPAVAITRTATQARQSNSVDLDKARLVVSVGRGIGSKENIALAEQLCKAIGAELACSRPVAENEKWMEHERYVGISNLMLKPELYLAVGISGQIQHMVGANASQTIFAINKDKNAPIFQYADYGIVGDAVKILPALTAALAR</sequence>
<feature type="chain" id="PRO_1000136329" description="Protein FixB">
    <location>
        <begin position="1"/>
        <end position="313"/>
    </location>
</feature>
<feature type="binding site" evidence="1">
    <location>
        <begin position="255"/>
        <end position="283"/>
    </location>
    <ligand>
        <name>FAD</name>
        <dbReference type="ChEBI" id="CHEBI:57692"/>
    </ligand>
</feature>
<protein>
    <recommendedName>
        <fullName evidence="1">Protein FixB</fullName>
    </recommendedName>
</protein>
<organism>
    <name type="scientific">Escherichia coli O7:K1 (strain IAI39 / ExPEC)</name>
    <dbReference type="NCBI Taxonomy" id="585057"/>
    <lineage>
        <taxon>Bacteria</taxon>
        <taxon>Pseudomonadati</taxon>
        <taxon>Pseudomonadota</taxon>
        <taxon>Gammaproteobacteria</taxon>
        <taxon>Enterobacterales</taxon>
        <taxon>Enterobacteriaceae</taxon>
        <taxon>Escherichia</taxon>
    </lineage>
</organism>
<proteinExistence type="inferred from homology"/>
<dbReference type="EMBL" id="CU928164">
    <property type="protein sequence ID" value="CAR16184.1"/>
    <property type="molecule type" value="Genomic_DNA"/>
</dbReference>
<dbReference type="RefSeq" id="WP_001091510.1">
    <property type="nucleotide sequence ID" value="NC_011750.1"/>
</dbReference>
<dbReference type="RefSeq" id="YP_002406091.1">
    <property type="nucleotide sequence ID" value="NC_011750.1"/>
</dbReference>
<dbReference type="SMR" id="B7NHE6"/>
<dbReference type="STRING" id="585057.ECIAI39_0043"/>
<dbReference type="KEGG" id="ect:ECIAI39_0043"/>
<dbReference type="PATRIC" id="fig|585057.6.peg.47"/>
<dbReference type="HOGENOM" id="CLU_034178_0_1_6"/>
<dbReference type="UniPathway" id="UPA00117"/>
<dbReference type="Proteomes" id="UP000000749">
    <property type="component" value="Chromosome"/>
</dbReference>
<dbReference type="GO" id="GO:0009055">
    <property type="term" value="F:electron transfer activity"/>
    <property type="evidence" value="ECO:0007669"/>
    <property type="project" value="InterPro"/>
</dbReference>
<dbReference type="GO" id="GO:0050660">
    <property type="term" value="F:flavin adenine dinucleotide binding"/>
    <property type="evidence" value="ECO:0007669"/>
    <property type="project" value="InterPro"/>
</dbReference>
<dbReference type="GO" id="GO:0009437">
    <property type="term" value="P:carnitine metabolic process"/>
    <property type="evidence" value="ECO:0007669"/>
    <property type="project" value="UniProtKB-UniRule"/>
</dbReference>
<dbReference type="GO" id="GO:0033539">
    <property type="term" value="P:fatty acid beta-oxidation using acyl-CoA dehydrogenase"/>
    <property type="evidence" value="ECO:0007669"/>
    <property type="project" value="TreeGrafter"/>
</dbReference>
<dbReference type="FunFam" id="3.40.50.1220:FF:000004">
    <property type="entry name" value="Electron transfer flavoprotein"/>
    <property type="match status" value="1"/>
</dbReference>
<dbReference type="FunFam" id="3.40.50.620:FF:000067">
    <property type="entry name" value="Protein FixB"/>
    <property type="match status" value="1"/>
</dbReference>
<dbReference type="Gene3D" id="3.40.50.620">
    <property type="entry name" value="HUPs"/>
    <property type="match status" value="1"/>
</dbReference>
<dbReference type="Gene3D" id="3.40.50.1220">
    <property type="entry name" value="TPP-binding domain"/>
    <property type="match status" value="1"/>
</dbReference>
<dbReference type="HAMAP" id="MF_01056">
    <property type="entry name" value="FixB"/>
    <property type="match status" value="1"/>
</dbReference>
<dbReference type="InterPro" id="IPR029035">
    <property type="entry name" value="DHS-like_NAD/FAD-binding_dom"/>
</dbReference>
<dbReference type="InterPro" id="IPR014730">
    <property type="entry name" value="ETF_a/b_N"/>
</dbReference>
<dbReference type="InterPro" id="IPR001308">
    <property type="entry name" value="ETF_a/FixB"/>
</dbReference>
<dbReference type="InterPro" id="IPR014731">
    <property type="entry name" value="ETF_asu_C"/>
</dbReference>
<dbReference type="InterPro" id="IPR018206">
    <property type="entry name" value="ETF_asu_C_CS"/>
</dbReference>
<dbReference type="InterPro" id="IPR023461">
    <property type="entry name" value="FixB"/>
</dbReference>
<dbReference type="InterPro" id="IPR014729">
    <property type="entry name" value="Rossmann-like_a/b/a_fold"/>
</dbReference>
<dbReference type="NCBIfam" id="NF002889">
    <property type="entry name" value="PRK03363.1"/>
    <property type="match status" value="1"/>
</dbReference>
<dbReference type="PANTHER" id="PTHR43153">
    <property type="entry name" value="ELECTRON TRANSFER FLAVOPROTEIN ALPHA"/>
    <property type="match status" value="1"/>
</dbReference>
<dbReference type="PANTHER" id="PTHR43153:SF5">
    <property type="entry name" value="PROTEIN FIXB-RELATED"/>
    <property type="match status" value="1"/>
</dbReference>
<dbReference type="Pfam" id="PF01012">
    <property type="entry name" value="ETF"/>
    <property type="match status" value="1"/>
</dbReference>
<dbReference type="Pfam" id="PF00766">
    <property type="entry name" value="ETF_alpha"/>
    <property type="match status" value="1"/>
</dbReference>
<dbReference type="PIRSF" id="PIRSF000089">
    <property type="entry name" value="Electra_flavoP_a"/>
    <property type="match status" value="1"/>
</dbReference>
<dbReference type="SMART" id="SM00893">
    <property type="entry name" value="ETF"/>
    <property type="match status" value="1"/>
</dbReference>
<dbReference type="SUPFAM" id="SSF52402">
    <property type="entry name" value="Adenine nucleotide alpha hydrolases-like"/>
    <property type="match status" value="1"/>
</dbReference>
<dbReference type="SUPFAM" id="SSF52467">
    <property type="entry name" value="DHS-like NAD/FAD-binding domain"/>
    <property type="match status" value="1"/>
</dbReference>
<dbReference type="PROSITE" id="PS00696">
    <property type="entry name" value="ETF_ALPHA"/>
    <property type="match status" value="1"/>
</dbReference>
<comment type="function">
    <text evidence="1">Required for anaerobic carnitine reduction. May bring reductant to CaiA.</text>
</comment>
<comment type="pathway">
    <text evidence="1">Amine and polyamine metabolism; carnitine metabolism.</text>
</comment>
<comment type="subunit">
    <text evidence="1">Heterodimer of FixA and FixB.</text>
</comment>
<comment type="similarity">
    <text evidence="1">Belongs to the ETF alpha-subunit/FixB family.</text>
</comment>
<reference key="1">
    <citation type="journal article" date="2009" name="PLoS Genet.">
        <title>Organised genome dynamics in the Escherichia coli species results in highly diverse adaptive paths.</title>
        <authorList>
            <person name="Touchon M."/>
            <person name="Hoede C."/>
            <person name="Tenaillon O."/>
            <person name="Barbe V."/>
            <person name="Baeriswyl S."/>
            <person name="Bidet P."/>
            <person name="Bingen E."/>
            <person name="Bonacorsi S."/>
            <person name="Bouchier C."/>
            <person name="Bouvet O."/>
            <person name="Calteau A."/>
            <person name="Chiapello H."/>
            <person name="Clermont O."/>
            <person name="Cruveiller S."/>
            <person name="Danchin A."/>
            <person name="Diard M."/>
            <person name="Dossat C."/>
            <person name="Karoui M.E."/>
            <person name="Frapy E."/>
            <person name="Garry L."/>
            <person name="Ghigo J.M."/>
            <person name="Gilles A.M."/>
            <person name="Johnson J."/>
            <person name="Le Bouguenec C."/>
            <person name="Lescat M."/>
            <person name="Mangenot S."/>
            <person name="Martinez-Jehanne V."/>
            <person name="Matic I."/>
            <person name="Nassif X."/>
            <person name="Oztas S."/>
            <person name="Petit M.A."/>
            <person name="Pichon C."/>
            <person name="Rouy Z."/>
            <person name="Ruf C.S."/>
            <person name="Schneider D."/>
            <person name="Tourret J."/>
            <person name="Vacherie B."/>
            <person name="Vallenet D."/>
            <person name="Medigue C."/>
            <person name="Rocha E.P.C."/>
            <person name="Denamur E."/>
        </authorList>
    </citation>
    <scope>NUCLEOTIDE SEQUENCE [LARGE SCALE GENOMIC DNA]</scope>
    <source>
        <strain>IAI39 / ExPEC</strain>
    </source>
</reference>